<accession>A5UH99</accession>
<gene>
    <name evidence="1" type="primary">recA</name>
    <name type="ordered locus">CGSHiGG_06270</name>
</gene>
<sequence length="354" mass="38133">MATQEEKQKALAAALGQIEKQFGKGSIMKLGDTKTLDVESISTGSLGLDVALGIGGLPMGRIVEIFGPESSGKTTLTLSVIAQAQKAGKTCAFIDAEHALDPIYAAKLGVDVKELFVSQPDNGEQALEICDALVRSGAIDVIIVDSVAALTPKAEIEGDMGDSHMGLQARLMSQALRKLTGQIKNANCLVVFINQIRMKIGVMFGNPETTTGGNALKFYSSVRLDIRRTGSVKDGENIIGNETRVKVVKNKLAAPFRQVDFQILYGEGISKAGELLELGVKHKLVEKSGAWYSYNGEKIGQGKANSMKWLNENIEKSDELEARLRAELVANPEQALMADIEQSENNTESESDFE</sequence>
<feature type="chain" id="PRO_1000047927" description="Protein RecA">
    <location>
        <begin position="1"/>
        <end position="354"/>
    </location>
</feature>
<feature type="binding site" evidence="1">
    <location>
        <begin position="67"/>
        <end position="74"/>
    </location>
    <ligand>
        <name>ATP</name>
        <dbReference type="ChEBI" id="CHEBI:30616"/>
    </ligand>
</feature>
<evidence type="ECO:0000255" key="1">
    <source>
        <dbReference type="HAMAP-Rule" id="MF_00268"/>
    </source>
</evidence>
<protein>
    <recommendedName>
        <fullName evidence="1">Protein RecA</fullName>
    </recommendedName>
    <alternativeName>
        <fullName evidence="1">Recombinase A</fullName>
    </alternativeName>
</protein>
<dbReference type="EMBL" id="CP000672">
    <property type="protein sequence ID" value="ABR00155.1"/>
    <property type="molecule type" value="Genomic_DNA"/>
</dbReference>
<dbReference type="SMR" id="A5UH99"/>
<dbReference type="KEGG" id="hiq:CGSHiGG_06270"/>
<dbReference type="HOGENOM" id="CLU_040469_3_2_6"/>
<dbReference type="Proteomes" id="UP000001990">
    <property type="component" value="Chromosome"/>
</dbReference>
<dbReference type="GO" id="GO:0005829">
    <property type="term" value="C:cytosol"/>
    <property type="evidence" value="ECO:0007669"/>
    <property type="project" value="TreeGrafter"/>
</dbReference>
<dbReference type="GO" id="GO:0005524">
    <property type="term" value="F:ATP binding"/>
    <property type="evidence" value="ECO:0007669"/>
    <property type="project" value="UniProtKB-UniRule"/>
</dbReference>
<dbReference type="GO" id="GO:0016887">
    <property type="term" value="F:ATP hydrolysis activity"/>
    <property type="evidence" value="ECO:0007669"/>
    <property type="project" value="InterPro"/>
</dbReference>
<dbReference type="GO" id="GO:0140664">
    <property type="term" value="F:ATP-dependent DNA damage sensor activity"/>
    <property type="evidence" value="ECO:0007669"/>
    <property type="project" value="InterPro"/>
</dbReference>
<dbReference type="GO" id="GO:0003684">
    <property type="term" value="F:damaged DNA binding"/>
    <property type="evidence" value="ECO:0007669"/>
    <property type="project" value="UniProtKB-UniRule"/>
</dbReference>
<dbReference type="GO" id="GO:0003697">
    <property type="term" value="F:single-stranded DNA binding"/>
    <property type="evidence" value="ECO:0007669"/>
    <property type="project" value="UniProtKB-UniRule"/>
</dbReference>
<dbReference type="GO" id="GO:0006310">
    <property type="term" value="P:DNA recombination"/>
    <property type="evidence" value="ECO:0007669"/>
    <property type="project" value="UniProtKB-UniRule"/>
</dbReference>
<dbReference type="GO" id="GO:0006281">
    <property type="term" value="P:DNA repair"/>
    <property type="evidence" value="ECO:0007669"/>
    <property type="project" value="UniProtKB-UniRule"/>
</dbReference>
<dbReference type="GO" id="GO:0009432">
    <property type="term" value="P:SOS response"/>
    <property type="evidence" value="ECO:0007669"/>
    <property type="project" value="UniProtKB-UniRule"/>
</dbReference>
<dbReference type="CDD" id="cd00983">
    <property type="entry name" value="RecA"/>
    <property type="match status" value="1"/>
</dbReference>
<dbReference type="FunFam" id="3.40.50.300:FF:000087">
    <property type="entry name" value="Recombinase RecA"/>
    <property type="match status" value="1"/>
</dbReference>
<dbReference type="Gene3D" id="3.40.50.300">
    <property type="entry name" value="P-loop containing nucleotide triphosphate hydrolases"/>
    <property type="match status" value="1"/>
</dbReference>
<dbReference type="HAMAP" id="MF_00268">
    <property type="entry name" value="RecA"/>
    <property type="match status" value="1"/>
</dbReference>
<dbReference type="InterPro" id="IPR003593">
    <property type="entry name" value="AAA+_ATPase"/>
</dbReference>
<dbReference type="InterPro" id="IPR013765">
    <property type="entry name" value="DNA_recomb/repair_RecA"/>
</dbReference>
<dbReference type="InterPro" id="IPR020584">
    <property type="entry name" value="DNA_recomb/repair_RecA_CS"/>
</dbReference>
<dbReference type="InterPro" id="IPR027417">
    <property type="entry name" value="P-loop_NTPase"/>
</dbReference>
<dbReference type="InterPro" id="IPR049261">
    <property type="entry name" value="RecA-like_C"/>
</dbReference>
<dbReference type="InterPro" id="IPR049428">
    <property type="entry name" value="RecA-like_N"/>
</dbReference>
<dbReference type="InterPro" id="IPR020588">
    <property type="entry name" value="RecA_ATP-bd"/>
</dbReference>
<dbReference type="InterPro" id="IPR023400">
    <property type="entry name" value="RecA_C_sf"/>
</dbReference>
<dbReference type="InterPro" id="IPR020587">
    <property type="entry name" value="RecA_monomer-monomer_interface"/>
</dbReference>
<dbReference type="NCBIfam" id="TIGR02012">
    <property type="entry name" value="tigrfam_recA"/>
    <property type="match status" value="1"/>
</dbReference>
<dbReference type="PANTHER" id="PTHR45900:SF1">
    <property type="entry name" value="MITOCHONDRIAL DNA REPAIR PROTEIN RECA HOMOLOG-RELATED"/>
    <property type="match status" value="1"/>
</dbReference>
<dbReference type="PANTHER" id="PTHR45900">
    <property type="entry name" value="RECA"/>
    <property type="match status" value="1"/>
</dbReference>
<dbReference type="Pfam" id="PF00154">
    <property type="entry name" value="RecA"/>
    <property type="match status" value="1"/>
</dbReference>
<dbReference type="Pfam" id="PF21096">
    <property type="entry name" value="RecA_C"/>
    <property type="match status" value="1"/>
</dbReference>
<dbReference type="PRINTS" id="PR00142">
    <property type="entry name" value="RECA"/>
</dbReference>
<dbReference type="SMART" id="SM00382">
    <property type="entry name" value="AAA"/>
    <property type="match status" value="1"/>
</dbReference>
<dbReference type="SUPFAM" id="SSF52540">
    <property type="entry name" value="P-loop containing nucleoside triphosphate hydrolases"/>
    <property type="match status" value="1"/>
</dbReference>
<dbReference type="SUPFAM" id="SSF54752">
    <property type="entry name" value="RecA protein, C-terminal domain"/>
    <property type="match status" value="1"/>
</dbReference>
<dbReference type="PROSITE" id="PS00321">
    <property type="entry name" value="RECA_1"/>
    <property type="match status" value="1"/>
</dbReference>
<dbReference type="PROSITE" id="PS50162">
    <property type="entry name" value="RECA_2"/>
    <property type="match status" value="1"/>
</dbReference>
<dbReference type="PROSITE" id="PS50163">
    <property type="entry name" value="RECA_3"/>
    <property type="match status" value="1"/>
</dbReference>
<keyword id="KW-0067">ATP-binding</keyword>
<keyword id="KW-0963">Cytoplasm</keyword>
<keyword id="KW-0227">DNA damage</keyword>
<keyword id="KW-0233">DNA recombination</keyword>
<keyword id="KW-0234">DNA repair</keyword>
<keyword id="KW-0238">DNA-binding</keyword>
<keyword id="KW-0547">Nucleotide-binding</keyword>
<keyword id="KW-0742">SOS response</keyword>
<proteinExistence type="inferred from homology"/>
<name>RECA_HAEIG</name>
<comment type="function">
    <text evidence="1">Can catalyze the hydrolysis of ATP in the presence of single-stranded DNA, the ATP-dependent uptake of single-stranded DNA by duplex DNA, and the ATP-dependent hybridization of homologous single-stranded DNAs. It interacts with LexA causing its activation and leading to its autocatalytic cleavage.</text>
</comment>
<comment type="subcellular location">
    <subcellularLocation>
        <location evidence="1">Cytoplasm</location>
    </subcellularLocation>
</comment>
<comment type="similarity">
    <text evidence="1">Belongs to the RecA family.</text>
</comment>
<reference key="1">
    <citation type="journal article" date="2007" name="Genome Biol.">
        <title>Characterization and modeling of the Haemophilus influenzae core and supragenomes based on the complete genomic sequences of Rd and 12 clinical nontypeable strains.</title>
        <authorList>
            <person name="Hogg J.S."/>
            <person name="Hu F.Z."/>
            <person name="Janto B."/>
            <person name="Boissy R."/>
            <person name="Hayes J."/>
            <person name="Keefe R."/>
            <person name="Post J.C."/>
            <person name="Ehrlich G.D."/>
        </authorList>
    </citation>
    <scope>NUCLEOTIDE SEQUENCE [LARGE SCALE GENOMIC DNA]</scope>
    <source>
        <strain>PittGG</strain>
    </source>
</reference>
<organism>
    <name type="scientific">Haemophilus influenzae (strain PittGG)</name>
    <dbReference type="NCBI Taxonomy" id="374931"/>
    <lineage>
        <taxon>Bacteria</taxon>
        <taxon>Pseudomonadati</taxon>
        <taxon>Pseudomonadota</taxon>
        <taxon>Gammaproteobacteria</taxon>
        <taxon>Pasteurellales</taxon>
        <taxon>Pasteurellaceae</taxon>
        <taxon>Haemophilus</taxon>
    </lineage>
</organism>